<gene>
    <name evidence="1" type="primary">murC</name>
    <name type="ordered locus">CLI_3768</name>
</gene>
<organism>
    <name type="scientific">Clostridium botulinum (strain Langeland / NCTC 10281 / Type F)</name>
    <dbReference type="NCBI Taxonomy" id="441772"/>
    <lineage>
        <taxon>Bacteria</taxon>
        <taxon>Bacillati</taxon>
        <taxon>Bacillota</taxon>
        <taxon>Clostridia</taxon>
        <taxon>Eubacteriales</taxon>
        <taxon>Clostridiaceae</taxon>
        <taxon>Clostridium</taxon>
    </lineage>
</organism>
<accession>A7GJE2</accession>
<feature type="chain" id="PRO_1000004334" description="UDP-N-acetylmuramate--L-alanine ligase">
    <location>
        <begin position="1"/>
        <end position="458"/>
    </location>
</feature>
<feature type="binding site" evidence="1">
    <location>
        <begin position="118"/>
        <end position="124"/>
    </location>
    <ligand>
        <name>ATP</name>
        <dbReference type="ChEBI" id="CHEBI:30616"/>
    </ligand>
</feature>
<keyword id="KW-0067">ATP-binding</keyword>
<keyword id="KW-0131">Cell cycle</keyword>
<keyword id="KW-0132">Cell division</keyword>
<keyword id="KW-0133">Cell shape</keyword>
<keyword id="KW-0961">Cell wall biogenesis/degradation</keyword>
<keyword id="KW-0963">Cytoplasm</keyword>
<keyword id="KW-0436">Ligase</keyword>
<keyword id="KW-0547">Nucleotide-binding</keyword>
<keyword id="KW-0573">Peptidoglycan synthesis</keyword>
<comment type="function">
    <text evidence="1">Cell wall formation.</text>
</comment>
<comment type="catalytic activity">
    <reaction evidence="1">
        <text>UDP-N-acetyl-alpha-D-muramate + L-alanine + ATP = UDP-N-acetyl-alpha-D-muramoyl-L-alanine + ADP + phosphate + H(+)</text>
        <dbReference type="Rhea" id="RHEA:23372"/>
        <dbReference type="ChEBI" id="CHEBI:15378"/>
        <dbReference type="ChEBI" id="CHEBI:30616"/>
        <dbReference type="ChEBI" id="CHEBI:43474"/>
        <dbReference type="ChEBI" id="CHEBI:57972"/>
        <dbReference type="ChEBI" id="CHEBI:70757"/>
        <dbReference type="ChEBI" id="CHEBI:83898"/>
        <dbReference type="ChEBI" id="CHEBI:456216"/>
        <dbReference type="EC" id="6.3.2.8"/>
    </reaction>
</comment>
<comment type="pathway">
    <text evidence="1">Cell wall biogenesis; peptidoglycan biosynthesis.</text>
</comment>
<comment type="subcellular location">
    <subcellularLocation>
        <location evidence="1">Cytoplasm</location>
    </subcellularLocation>
</comment>
<comment type="similarity">
    <text evidence="1">Belongs to the MurCDEF family.</text>
</comment>
<protein>
    <recommendedName>
        <fullName evidence="1">UDP-N-acetylmuramate--L-alanine ligase</fullName>
        <ecNumber evidence="1">6.3.2.8</ecNumber>
    </recommendedName>
    <alternativeName>
        <fullName evidence="1">UDP-N-acetylmuramoyl-L-alanine synthetase</fullName>
    </alternativeName>
</protein>
<sequence>MSFDFIKDKNKHIHFIGIGGISMSGLAEILLYNNFSISGSDMNSSPITEKLKDKGAKIYIGHKKENIKDADLIVYTAAIASDNPEIIEAKEKNIKLMDRADFLGNLMKGYKYNIAISGTHGKTTTTSMLSHVALKANVDPTILVGGNLDIINGNVRVGESDFFITEACEYKSSFLKFFPYIGVILNIDADHLDYYKDLDDIKNAFSKFIKLIPKDGYLVAYGEDKNIQSIIKEANCNVITYGINSGDIQAHNIEYDEKACGNFDVVKDNQKLFSVKLNVPGKHNILNSLASICIGLASNMKDKDIIEGIESFFGTHRRFELKGCKNNITVIDDYAHHPTEISATLDAAKKYPHNKLFCVFQPHTYSRTLTLFDDFTKCFDNADEIILADIYAAREKDTGIISSDMLGDKLRDRGLKCTNFHKFDDIKNYLIENAKDGDLILTVGAGDIYKVGEMYINL</sequence>
<dbReference type="EC" id="6.3.2.8" evidence="1"/>
<dbReference type="EMBL" id="CP000728">
    <property type="protein sequence ID" value="ABS41409.1"/>
    <property type="molecule type" value="Genomic_DNA"/>
</dbReference>
<dbReference type="RefSeq" id="WP_012101165.1">
    <property type="nucleotide sequence ID" value="NC_009699.1"/>
</dbReference>
<dbReference type="SMR" id="A7GJE2"/>
<dbReference type="KEGG" id="cbf:CLI_3768"/>
<dbReference type="HOGENOM" id="CLU_028104_1_0_9"/>
<dbReference type="UniPathway" id="UPA00219"/>
<dbReference type="Proteomes" id="UP000002410">
    <property type="component" value="Chromosome"/>
</dbReference>
<dbReference type="GO" id="GO:0005737">
    <property type="term" value="C:cytoplasm"/>
    <property type="evidence" value="ECO:0007669"/>
    <property type="project" value="UniProtKB-SubCell"/>
</dbReference>
<dbReference type="GO" id="GO:0005524">
    <property type="term" value="F:ATP binding"/>
    <property type="evidence" value="ECO:0007669"/>
    <property type="project" value="UniProtKB-UniRule"/>
</dbReference>
<dbReference type="GO" id="GO:0008763">
    <property type="term" value="F:UDP-N-acetylmuramate-L-alanine ligase activity"/>
    <property type="evidence" value="ECO:0007669"/>
    <property type="project" value="UniProtKB-UniRule"/>
</dbReference>
<dbReference type="GO" id="GO:0051301">
    <property type="term" value="P:cell division"/>
    <property type="evidence" value="ECO:0007669"/>
    <property type="project" value="UniProtKB-KW"/>
</dbReference>
<dbReference type="GO" id="GO:0071555">
    <property type="term" value="P:cell wall organization"/>
    <property type="evidence" value="ECO:0007669"/>
    <property type="project" value="UniProtKB-KW"/>
</dbReference>
<dbReference type="GO" id="GO:0009252">
    <property type="term" value="P:peptidoglycan biosynthetic process"/>
    <property type="evidence" value="ECO:0007669"/>
    <property type="project" value="UniProtKB-UniRule"/>
</dbReference>
<dbReference type="GO" id="GO:0008360">
    <property type="term" value="P:regulation of cell shape"/>
    <property type="evidence" value="ECO:0007669"/>
    <property type="project" value="UniProtKB-KW"/>
</dbReference>
<dbReference type="Gene3D" id="3.90.190.20">
    <property type="entry name" value="Mur ligase, C-terminal domain"/>
    <property type="match status" value="1"/>
</dbReference>
<dbReference type="Gene3D" id="3.40.1190.10">
    <property type="entry name" value="Mur-like, catalytic domain"/>
    <property type="match status" value="1"/>
</dbReference>
<dbReference type="Gene3D" id="3.40.50.720">
    <property type="entry name" value="NAD(P)-binding Rossmann-like Domain"/>
    <property type="match status" value="1"/>
</dbReference>
<dbReference type="HAMAP" id="MF_00046">
    <property type="entry name" value="MurC"/>
    <property type="match status" value="1"/>
</dbReference>
<dbReference type="InterPro" id="IPR036565">
    <property type="entry name" value="Mur-like_cat_sf"/>
</dbReference>
<dbReference type="InterPro" id="IPR004101">
    <property type="entry name" value="Mur_ligase_C"/>
</dbReference>
<dbReference type="InterPro" id="IPR036615">
    <property type="entry name" value="Mur_ligase_C_dom_sf"/>
</dbReference>
<dbReference type="InterPro" id="IPR013221">
    <property type="entry name" value="Mur_ligase_cen"/>
</dbReference>
<dbReference type="InterPro" id="IPR000713">
    <property type="entry name" value="Mur_ligase_N"/>
</dbReference>
<dbReference type="InterPro" id="IPR050061">
    <property type="entry name" value="MurCDEF_pg_biosynth"/>
</dbReference>
<dbReference type="InterPro" id="IPR005758">
    <property type="entry name" value="UDP-N-AcMur_Ala_ligase_MurC"/>
</dbReference>
<dbReference type="NCBIfam" id="TIGR01082">
    <property type="entry name" value="murC"/>
    <property type="match status" value="1"/>
</dbReference>
<dbReference type="PANTHER" id="PTHR43445:SF3">
    <property type="entry name" value="UDP-N-ACETYLMURAMATE--L-ALANINE LIGASE"/>
    <property type="match status" value="1"/>
</dbReference>
<dbReference type="PANTHER" id="PTHR43445">
    <property type="entry name" value="UDP-N-ACETYLMURAMATE--L-ALANINE LIGASE-RELATED"/>
    <property type="match status" value="1"/>
</dbReference>
<dbReference type="Pfam" id="PF01225">
    <property type="entry name" value="Mur_ligase"/>
    <property type="match status" value="1"/>
</dbReference>
<dbReference type="Pfam" id="PF02875">
    <property type="entry name" value="Mur_ligase_C"/>
    <property type="match status" value="1"/>
</dbReference>
<dbReference type="Pfam" id="PF08245">
    <property type="entry name" value="Mur_ligase_M"/>
    <property type="match status" value="1"/>
</dbReference>
<dbReference type="SUPFAM" id="SSF51984">
    <property type="entry name" value="MurCD N-terminal domain"/>
    <property type="match status" value="1"/>
</dbReference>
<dbReference type="SUPFAM" id="SSF53623">
    <property type="entry name" value="MurD-like peptide ligases, catalytic domain"/>
    <property type="match status" value="1"/>
</dbReference>
<dbReference type="SUPFAM" id="SSF53244">
    <property type="entry name" value="MurD-like peptide ligases, peptide-binding domain"/>
    <property type="match status" value="1"/>
</dbReference>
<reference key="1">
    <citation type="submission" date="2007-06" db="EMBL/GenBank/DDBJ databases">
        <authorList>
            <person name="Brinkac L.M."/>
            <person name="Daugherty S."/>
            <person name="Dodson R.J."/>
            <person name="Madupu R."/>
            <person name="Brown J.L."/>
            <person name="Bruce D."/>
            <person name="Detter C."/>
            <person name="Munk C."/>
            <person name="Smith L.A."/>
            <person name="Smith T.J."/>
            <person name="White O."/>
            <person name="Brettin T.S."/>
        </authorList>
    </citation>
    <scope>NUCLEOTIDE SEQUENCE [LARGE SCALE GENOMIC DNA]</scope>
    <source>
        <strain>Langeland / NCTC 10281 / Type F</strain>
    </source>
</reference>
<name>MURC_CLOBL</name>
<evidence type="ECO:0000255" key="1">
    <source>
        <dbReference type="HAMAP-Rule" id="MF_00046"/>
    </source>
</evidence>
<proteinExistence type="inferred from homology"/>